<protein>
    <recommendedName>
        <fullName evidence="5">CCR4-Not complex 3'-5'-exoribonuclease subunit Ccr4</fullName>
        <ecNumber>3.1.13.4</ecNumber>
    </recommendedName>
    <alternativeName>
        <fullName>Carbon catabolite repressor protein 4</fullName>
    </alternativeName>
    <alternativeName>
        <fullName>Cytoplasmic deadenylase</fullName>
    </alternativeName>
    <alternativeName>
        <fullName>Glucose-repressible alcohol dehydrogenase transcriptional effector</fullName>
    </alternativeName>
</protein>
<comment type="function">
    <text evidence="3">Acts as a catalytic component of the CCR4-NOT core complex, which in the nucleus seems to be a general transcription factor, and in the cytoplasm the major mRNA deadenylase involved in mRNA turnover (By similarity). Ccr4 has 3'-5' RNase activity with a strong preference for polyadenylated substrates and also low exonuclease activity towards single-stranded DNA (By similarity).</text>
</comment>
<comment type="catalytic activity">
    <reaction>
        <text>Exonucleolytic cleavage of poly(A) to 5'-AMP.</text>
        <dbReference type="EC" id="3.1.13.4"/>
    </reaction>
</comment>
<comment type="cofactor">
    <cofactor evidence="1">
        <name>Mg(2+)</name>
        <dbReference type="ChEBI" id="CHEBI:18420"/>
    </cofactor>
</comment>
<comment type="subcellular location">
    <subcellularLocation>
        <location evidence="1">Cytoplasm</location>
    </subcellularLocation>
    <subcellularLocation>
        <location evidence="1">Nucleus</location>
    </subcellularLocation>
</comment>
<comment type="similarity">
    <text evidence="5">Belongs to the CCR4/nocturin family.</text>
</comment>
<proteinExistence type="inferred from homology"/>
<sequence length="873" mass="98578">MNDISMMGYPGMGQQQPQPQQAQQPQQQPISMQPHTMMNMMNTNLPPPGMMMGGAGSNTGNENMINHGLMSGNPVSGIPNNNSHQLLDQLINKNPNNMGIPQQQQDSLAAQMQLPMGGMPMGNGSAHNGNVGMNNNNTGGNNNIPMGNANVLRNNNIIGNLGGSSLAGGNMNSGMPGISTFGNTPGQLAAPPIQPNANANNPMYHPHLEDPSLMNNPIWKLQLQLATVSAQSVGQPNIYARQNAMKKYLATQVPPQNQTQQQAQAQSQIAETSKSLVDCTKQALMDIMAPDDSKLKGMSAPNTASTTTNSTISTPTTSKIDMNNSREQPSTPSLLLQHKKLSQYSIDEDDEVENRMVAPKDTKYNDQIWHAIDLSNLQIFNISPNLMKYDFLTRLYLNGNGLESIPSSIRNLKNLRVLDLSHNKLKELPKEIGNCYQLKYLYFFDNQITTLPWELGNLCNIQFLGCEGNPLDKELLKILTEKSFTGLIFYLRDNRPEVPYPHDRKFIEINADGEPEKEYDTVQEAERNLSSDMQKKSFTMLSYNTLCQHYATPKMYRYTPSWALSWDYRREKLKEQILNFNTDIICLQEVEAKTFEDFWQPLLEKHGYTGLFHAKTRAKTMQSKDSKKVDGCCAFYKTSKFKMLFKECVDFSGLWMKHKKFQRTEDYLNRAMNKDNVAIVMKLQHIQSGEIMWLVTTHLHWDPKFNDVKTFQVGVLLDHMETLLKEQNPKQDVKKYPLVICGDLNSYLSSSVYELFSTGRVQHHHDGKDRDFGYFSEDNFSHNLALKSSYNCIGELAFTNFTPSFTDVIDYIWFSSQALRVRGLLGEVDSEYVSNFIGFPNDKFPSDHIPLLGRYEFLKSNNTQNSNSGSRKV</sequence>
<feature type="chain" id="PRO_0000290608" description="CCR4-Not complex 3'-5'-exoribonuclease subunit Ccr4">
    <location>
        <begin position="1"/>
        <end position="873"/>
    </location>
</feature>
<feature type="repeat" description="LRR 1">
    <location>
        <begin position="391"/>
        <end position="412"/>
    </location>
</feature>
<feature type="repeat" description="LRR 2">
    <location>
        <begin position="414"/>
        <end position="435"/>
    </location>
</feature>
<feature type="repeat" description="LRR 3">
    <location>
        <begin position="437"/>
        <end position="459"/>
    </location>
</feature>
<feature type="repeat" description="LRR 4">
    <location>
        <begin position="460"/>
        <end position="480"/>
    </location>
</feature>
<feature type="region of interest" description="Disordered" evidence="4">
    <location>
        <begin position="1"/>
        <end position="29"/>
    </location>
</feature>
<feature type="region of interest" description="Disordered" evidence="4">
    <location>
        <begin position="292"/>
        <end position="332"/>
    </location>
</feature>
<feature type="compositionally biased region" description="Low complexity" evidence="4">
    <location>
        <begin position="14"/>
        <end position="29"/>
    </location>
</feature>
<feature type="compositionally biased region" description="Low complexity" evidence="4">
    <location>
        <begin position="299"/>
        <end position="318"/>
    </location>
</feature>
<feature type="compositionally biased region" description="Polar residues" evidence="4">
    <location>
        <begin position="319"/>
        <end position="332"/>
    </location>
</feature>
<feature type="binding site" evidence="2">
    <location>
        <position position="589"/>
    </location>
    <ligand>
        <name>Mg(2+)</name>
        <dbReference type="ChEBI" id="CHEBI:18420"/>
    </ligand>
</feature>
<keyword id="KW-0963">Cytoplasm</keyword>
<keyword id="KW-0269">Exonuclease</keyword>
<keyword id="KW-0378">Hydrolase</keyword>
<keyword id="KW-0433">Leucine-rich repeat</keyword>
<keyword id="KW-0460">Magnesium</keyword>
<keyword id="KW-0479">Metal-binding</keyword>
<keyword id="KW-0540">Nuclease</keyword>
<keyword id="KW-0539">Nucleus</keyword>
<keyword id="KW-1185">Reference proteome</keyword>
<keyword id="KW-0677">Repeat</keyword>
<keyword id="KW-0694">RNA-binding</keyword>
<keyword id="KW-0804">Transcription</keyword>
<keyword id="KW-0805">Transcription regulation</keyword>
<accession>Q6FRT2</accession>
<name>CCR4_CANGA</name>
<reference key="1">
    <citation type="journal article" date="2004" name="Nature">
        <title>Genome evolution in yeasts.</title>
        <authorList>
            <person name="Dujon B."/>
            <person name="Sherman D."/>
            <person name="Fischer G."/>
            <person name="Durrens P."/>
            <person name="Casaregola S."/>
            <person name="Lafontaine I."/>
            <person name="de Montigny J."/>
            <person name="Marck C."/>
            <person name="Neuveglise C."/>
            <person name="Talla E."/>
            <person name="Goffard N."/>
            <person name="Frangeul L."/>
            <person name="Aigle M."/>
            <person name="Anthouard V."/>
            <person name="Babour A."/>
            <person name="Barbe V."/>
            <person name="Barnay S."/>
            <person name="Blanchin S."/>
            <person name="Beckerich J.-M."/>
            <person name="Beyne E."/>
            <person name="Bleykasten C."/>
            <person name="Boisrame A."/>
            <person name="Boyer J."/>
            <person name="Cattolico L."/>
            <person name="Confanioleri F."/>
            <person name="de Daruvar A."/>
            <person name="Despons L."/>
            <person name="Fabre E."/>
            <person name="Fairhead C."/>
            <person name="Ferry-Dumazet H."/>
            <person name="Groppi A."/>
            <person name="Hantraye F."/>
            <person name="Hennequin C."/>
            <person name="Jauniaux N."/>
            <person name="Joyet P."/>
            <person name="Kachouri R."/>
            <person name="Kerrest A."/>
            <person name="Koszul R."/>
            <person name="Lemaire M."/>
            <person name="Lesur I."/>
            <person name="Ma L."/>
            <person name="Muller H."/>
            <person name="Nicaud J.-M."/>
            <person name="Nikolski M."/>
            <person name="Oztas S."/>
            <person name="Ozier-Kalogeropoulos O."/>
            <person name="Pellenz S."/>
            <person name="Potier S."/>
            <person name="Richard G.-F."/>
            <person name="Straub M.-L."/>
            <person name="Suleau A."/>
            <person name="Swennen D."/>
            <person name="Tekaia F."/>
            <person name="Wesolowski-Louvel M."/>
            <person name="Westhof E."/>
            <person name="Wirth B."/>
            <person name="Zeniou-Meyer M."/>
            <person name="Zivanovic Y."/>
            <person name="Bolotin-Fukuhara M."/>
            <person name="Thierry A."/>
            <person name="Bouchier C."/>
            <person name="Caudron B."/>
            <person name="Scarpelli C."/>
            <person name="Gaillardin C."/>
            <person name="Weissenbach J."/>
            <person name="Wincker P."/>
            <person name="Souciet J.-L."/>
        </authorList>
    </citation>
    <scope>NUCLEOTIDE SEQUENCE [LARGE SCALE GENOMIC DNA]</scope>
    <source>
        <strain>ATCC 2001 / BCRC 20586 / JCM 3761 / NBRC 0622 / NRRL Y-65 / CBS 138</strain>
    </source>
</reference>
<gene>
    <name type="primary">CCR4</name>
    <name type="ordered locus">CAGL0H06149g</name>
</gene>
<organism>
    <name type="scientific">Candida glabrata (strain ATCC 2001 / BCRC 20586 / JCM 3761 / NBRC 0622 / NRRL Y-65 / CBS 138)</name>
    <name type="common">Yeast</name>
    <name type="synonym">Nakaseomyces glabratus</name>
    <dbReference type="NCBI Taxonomy" id="284593"/>
    <lineage>
        <taxon>Eukaryota</taxon>
        <taxon>Fungi</taxon>
        <taxon>Dikarya</taxon>
        <taxon>Ascomycota</taxon>
        <taxon>Saccharomycotina</taxon>
        <taxon>Saccharomycetes</taxon>
        <taxon>Saccharomycetales</taxon>
        <taxon>Saccharomycetaceae</taxon>
        <taxon>Nakaseomyces</taxon>
    </lineage>
</organism>
<dbReference type="EC" id="3.1.13.4"/>
<dbReference type="EMBL" id="CR380954">
    <property type="protein sequence ID" value="CAG59995.1"/>
    <property type="molecule type" value="Genomic_DNA"/>
</dbReference>
<dbReference type="RefSeq" id="XP_447062.1">
    <property type="nucleotide sequence ID" value="XM_447062.1"/>
</dbReference>
<dbReference type="SMR" id="Q6FRT2"/>
<dbReference type="FunCoup" id="Q6FRT2">
    <property type="interactions" value="508"/>
</dbReference>
<dbReference type="STRING" id="284593.Q6FRT2"/>
<dbReference type="EnsemblFungi" id="CAGL0H06149g-T">
    <property type="protein sequence ID" value="CAGL0H06149g-T-p1"/>
    <property type="gene ID" value="CAGL0H06149g"/>
</dbReference>
<dbReference type="KEGG" id="cgr:2888713"/>
<dbReference type="CGD" id="CAL0131866">
    <property type="gene designation" value="CAGL0H06149g"/>
</dbReference>
<dbReference type="VEuPathDB" id="FungiDB:CAGL0H06149g"/>
<dbReference type="eggNOG" id="KOG0620">
    <property type="taxonomic scope" value="Eukaryota"/>
</dbReference>
<dbReference type="HOGENOM" id="CLU_016428_4_1_1"/>
<dbReference type="InParanoid" id="Q6FRT2"/>
<dbReference type="OMA" id="LWHAIDF"/>
<dbReference type="Proteomes" id="UP000002428">
    <property type="component" value="Chromosome H"/>
</dbReference>
<dbReference type="GO" id="GO:0030015">
    <property type="term" value="C:CCR4-NOT core complex"/>
    <property type="evidence" value="ECO:0007669"/>
    <property type="project" value="EnsemblFungi"/>
</dbReference>
<dbReference type="GO" id="GO:0016593">
    <property type="term" value="C:Cdc73/Paf1 complex"/>
    <property type="evidence" value="ECO:0007669"/>
    <property type="project" value="EnsemblFungi"/>
</dbReference>
<dbReference type="GO" id="GO:0000932">
    <property type="term" value="C:P-body"/>
    <property type="evidence" value="ECO:0007669"/>
    <property type="project" value="EnsemblFungi"/>
</dbReference>
<dbReference type="GO" id="GO:0046872">
    <property type="term" value="F:metal ion binding"/>
    <property type="evidence" value="ECO:0007669"/>
    <property type="project" value="UniProtKB-KW"/>
</dbReference>
<dbReference type="GO" id="GO:0004535">
    <property type="term" value="F:poly(A)-specific ribonuclease activity"/>
    <property type="evidence" value="ECO:0007669"/>
    <property type="project" value="UniProtKB-EC"/>
</dbReference>
<dbReference type="GO" id="GO:0003723">
    <property type="term" value="F:RNA binding"/>
    <property type="evidence" value="ECO:0007669"/>
    <property type="project" value="UniProtKB-KW"/>
</dbReference>
<dbReference type="GO" id="GO:0006260">
    <property type="term" value="P:DNA replication"/>
    <property type="evidence" value="ECO:0007669"/>
    <property type="project" value="EnsemblFungi"/>
</dbReference>
<dbReference type="GO" id="GO:0000076">
    <property type="term" value="P:DNA replication checkpoint signaling"/>
    <property type="evidence" value="ECO:0007669"/>
    <property type="project" value="EnsemblFungi"/>
</dbReference>
<dbReference type="GO" id="GO:0000289">
    <property type="term" value="P:nuclear-transcribed mRNA poly(A) tail shortening"/>
    <property type="evidence" value="ECO:0007669"/>
    <property type="project" value="EnsemblFungi"/>
</dbReference>
<dbReference type="GO" id="GO:0032968">
    <property type="term" value="P:positive regulation of transcription elongation by RNA polymerase II"/>
    <property type="evidence" value="ECO:0007669"/>
    <property type="project" value="EnsemblFungi"/>
</dbReference>
<dbReference type="GO" id="GO:0006368">
    <property type="term" value="P:transcription elongation by RNA polymerase II"/>
    <property type="evidence" value="ECO:0007669"/>
    <property type="project" value="EnsemblFungi"/>
</dbReference>
<dbReference type="GO" id="GO:0007089">
    <property type="term" value="P:traversing start control point of mitotic cell cycle"/>
    <property type="evidence" value="ECO:0007669"/>
    <property type="project" value="EnsemblFungi"/>
</dbReference>
<dbReference type="FunFam" id="3.60.10.10:FF:000037">
    <property type="entry name" value="Glucose-repressible alcohol dehydrogenase transcriptional effector"/>
    <property type="match status" value="1"/>
</dbReference>
<dbReference type="FunFam" id="3.80.10.10:FF:000598">
    <property type="entry name" value="Glucose-repressible alcohol dehydrogenase transcriptional effector"/>
    <property type="match status" value="1"/>
</dbReference>
<dbReference type="Gene3D" id="3.60.10.10">
    <property type="entry name" value="Endonuclease/exonuclease/phosphatase"/>
    <property type="match status" value="1"/>
</dbReference>
<dbReference type="Gene3D" id="3.80.10.10">
    <property type="entry name" value="Ribonuclease Inhibitor"/>
    <property type="match status" value="2"/>
</dbReference>
<dbReference type="InterPro" id="IPR050410">
    <property type="entry name" value="CCR4/nocturin_mRNA_transcr"/>
</dbReference>
<dbReference type="InterPro" id="IPR036691">
    <property type="entry name" value="Endo/exonu/phosph_ase_sf"/>
</dbReference>
<dbReference type="InterPro" id="IPR005135">
    <property type="entry name" value="Endo/exonuclease/phosphatase"/>
</dbReference>
<dbReference type="InterPro" id="IPR001611">
    <property type="entry name" value="Leu-rich_rpt"/>
</dbReference>
<dbReference type="InterPro" id="IPR003591">
    <property type="entry name" value="Leu-rich_rpt_typical-subtyp"/>
</dbReference>
<dbReference type="InterPro" id="IPR032675">
    <property type="entry name" value="LRR_dom_sf"/>
</dbReference>
<dbReference type="PANTHER" id="PTHR12121">
    <property type="entry name" value="CARBON CATABOLITE REPRESSOR PROTEIN 4"/>
    <property type="match status" value="1"/>
</dbReference>
<dbReference type="PANTHER" id="PTHR12121:SF100">
    <property type="entry name" value="POLY(A)-SPECIFIC RIBONUCLEASE"/>
    <property type="match status" value="1"/>
</dbReference>
<dbReference type="Pfam" id="PF03372">
    <property type="entry name" value="Exo_endo_phos"/>
    <property type="match status" value="1"/>
</dbReference>
<dbReference type="Pfam" id="PF13855">
    <property type="entry name" value="LRR_8"/>
    <property type="match status" value="1"/>
</dbReference>
<dbReference type="SMART" id="SM00369">
    <property type="entry name" value="LRR_TYP"/>
    <property type="match status" value="2"/>
</dbReference>
<dbReference type="SUPFAM" id="SSF56219">
    <property type="entry name" value="DNase I-like"/>
    <property type="match status" value="1"/>
</dbReference>
<dbReference type="SUPFAM" id="SSF52058">
    <property type="entry name" value="L domain-like"/>
    <property type="match status" value="1"/>
</dbReference>
<dbReference type="PROSITE" id="PS51450">
    <property type="entry name" value="LRR"/>
    <property type="match status" value="3"/>
</dbReference>
<evidence type="ECO:0000250" key="1"/>
<evidence type="ECO:0000250" key="2">
    <source>
        <dbReference type="UniProtKB" id="O95551"/>
    </source>
</evidence>
<evidence type="ECO:0000250" key="3">
    <source>
        <dbReference type="UniProtKB" id="P31384"/>
    </source>
</evidence>
<evidence type="ECO:0000256" key="4">
    <source>
        <dbReference type="SAM" id="MobiDB-lite"/>
    </source>
</evidence>
<evidence type="ECO:0000305" key="5"/>